<reference key="1">
    <citation type="journal article" date="2001" name="Nature">
        <title>Genome sequence of Yersinia pestis, the causative agent of plague.</title>
        <authorList>
            <person name="Parkhill J."/>
            <person name="Wren B.W."/>
            <person name="Thomson N.R."/>
            <person name="Titball R.W."/>
            <person name="Holden M.T.G."/>
            <person name="Prentice M.B."/>
            <person name="Sebaihia M."/>
            <person name="James K.D."/>
            <person name="Churcher C.M."/>
            <person name="Mungall K.L."/>
            <person name="Baker S."/>
            <person name="Basham D."/>
            <person name="Bentley S.D."/>
            <person name="Brooks K."/>
            <person name="Cerdeno-Tarraga A.-M."/>
            <person name="Chillingworth T."/>
            <person name="Cronin A."/>
            <person name="Davies R.M."/>
            <person name="Davis P."/>
            <person name="Dougan G."/>
            <person name="Feltwell T."/>
            <person name="Hamlin N."/>
            <person name="Holroyd S."/>
            <person name="Jagels K."/>
            <person name="Karlyshev A.V."/>
            <person name="Leather S."/>
            <person name="Moule S."/>
            <person name="Oyston P.C.F."/>
            <person name="Quail M.A."/>
            <person name="Rutherford K.M."/>
            <person name="Simmonds M."/>
            <person name="Skelton J."/>
            <person name="Stevens K."/>
            <person name="Whitehead S."/>
            <person name="Barrell B.G."/>
        </authorList>
    </citation>
    <scope>NUCLEOTIDE SEQUENCE [LARGE SCALE GENOMIC DNA]</scope>
    <source>
        <strain>CO-92 / Biovar Orientalis</strain>
    </source>
</reference>
<reference key="2">
    <citation type="journal article" date="2002" name="J. Bacteriol.">
        <title>Genome sequence of Yersinia pestis KIM.</title>
        <authorList>
            <person name="Deng W."/>
            <person name="Burland V."/>
            <person name="Plunkett G. III"/>
            <person name="Boutin A."/>
            <person name="Mayhew G.F."/>
            <person name="Liss P."/>
            <person name="Perna N.T."/>
            <person name="Rose D.J."/>
            <person name="Mau B."/>
            <person name="Zhou S."/>
            <person name="Schwartz D.C."/>
            <person name="Fetherston J.D."/>
            <person name="Lindler L.E."/>
            <person name="Brubaker R.R."/>
            <person name="Plano G.V."/>
            <person name="Straley S.C."/>
            <person name="McDonough K.A."/>
            <person name="Nilles M.L."/>
            <person name="Matson J.S."/>
            <person name="Blattner F.R."/>
            <person name="Perry R.D."/>
        </authorList>
    </citation>
    <scope>NUCLEOTIDE SEQUENCE [LARGE SCALE GENOMIC DNA]</scope>
    <source>
        <strain>KIM10+ / Biovar Mediaevalis</strain>
    </source>
</reference>
<reference key="3">
    <citation type="journal article" date="2004" name="DNA Res.">
        <title>Complete genome sequence of Yersinia pestis strain 91001, an isolate avirulent to humans.</title>
        <authorList>
            <person name="Song Y."/>
            <person name="Tong Z."/>
            <person name="Wang J."/>
            <person name="Wang L."/>
            <person name="Guo Z."/>
            <person name="Han Y."/>
            <person name="Zhang J."/>
            <person name="Pei D."/>
            <person name="Zhou D."/>
            <person name="Qin H."/>
            <person name="Pang X."/>
            <person name="Han Y."/>
            <person name="Zhai J."/>
            <person name="Li M."/>
            <person name="Cui B."/>
            <person name="Qi Z."/>
            <person name="Jin L."/>
            <person name="Dai R."/>
            <person name="Chen F."/>
            <person name="Li S."/>
            <person name="Ye C."/>
            <person name="Du Z."/>
            <person name="Lin W."/>
            <person name="Wang J."/>
            <person name="Yu J."/>
            <person name="Yang H."/>
            <person name="Wang J."/>
            <person name="Huang P."/>
            <person name="Yang R."/>
        </authorList>
    </citation>
    <scope>NUCLEOTIDE SEQUENCE [LARGE SCALE GENOMIC DNA]</scope>
    <source>
        <strain>91001 / Biovar Mediaevalis</strain>
    </source>
</reference>
<keyword id="KW-0413">Isomerase</keyword>
<keyword id="KW-1185">Reference proteome</keyword>
<keyword id="KW-0819">tRNA processing</keyword>
<accession>Q8ZH72</accession>
<accession>Q0WI07</accession>
<organism>
    <name type="scientific">Yersinia pestis</name>
    <dbReference type="NCBI Taxonomy" id="632"/>
    <lineage>
        <taxon>Bacteria</taxon>
        <taxon>Pseudomonadati</taxon>
        <taxon>Pseudomonadota</taxon>
        <taxon>Gammaproteobacteria</taxon>
        <taxon>Enterobacterales</taxon>
        <taxon>Yersiniaceae</taxon>
        <taxon>Yersinia</taxon>
    </lineage>
</organism>
<sequence length="257" mass="29212">MLEIIYQDEHIVAVNKPAGWLVHRSWLDRNETVFVMQTVRDQIGQHVYTVHRLDRPTSGVLLMALSSDVARMLSLQFEQHQIQKTYHAVVRGYVLEGGTVDYAMAEELDKIADKFAKSDKAPQPSVSHYEALAQVEVPLAIGRYETARYSLVALKPETGRKHQLRRHMAHIRHPIIGDSTHGDLRQNRGVAQHFGCSRLMLHASHLHLNHPVTGEALTLTARWDEPWQGLMSQFGWSGIAPHLERVEFPLTASQDNE</sequence>
<comment type="function">
    <text evidence="1">Responsible for synthesis of pseudouridine from uracil-65 in transfer RNAs.</text>
</comment>
<comment type="catalytic activity">
    <reaction>
        <text>uridine(65) in tRNA = pseudouridine(65) in tRNA</text>
        <dbReference type="Rhea" id="RHEA:42536"/>
        <dbReference type="Rhea" id="RHEA-COMP:10103"/>
        <dbReference type="Rhea" id="RHEA-COMP:10104"/>
        <dbReference type="ChEBI" id="CHEBI:65314"/>
        <dbReference type="ChEBI" id="CHEBI:65315"/>
        <dbReference type="EC" id="5.4.99.26"/>
    </reaction>
</comment>
<comment type="similarity">
    <text evidence="2">Belongs to the pseudouridine synthase RluA family.</text>
</comment>
<evidence type="ECO:0000250" key="1"/>
<evidence type="ECO:0000305" key="2"/>
<protein>
    <recommendedName>
        <fullName>tRNA pseudouridine synthase C</fullName>
        <ecNumber>5.4.99.26</ecNumber>
    </recommendedName>
    <alternativeName>
        <fullName>tRNA pseudouridine(65) synthase</fullName>
    </alternativeName>
    <alternativeName>
        <fullName>tRNA pseudouridylate synthase C</fullName>
    </alternativeName>
    <alternativeName>
        <fullName>tRNA-uridine isomerase C</fullName>
    </alternativeName>
</protein>
<gene>
    <name type="primary">truC</name>
    <name type="ordered locus">YPO1038</name>
    <name type="ordered locus">y3143</name>
    <name type="ordered locus">YP_2813</name>
</gene>
<name>TRUC_YERPE</name>
<proteinExistence type="inferred from homology"/>
<dbReference type="EC" id="5.4.99.26"/>
<dbReference type="EMBL" id="AL590842">
    <property type="protein sequence ID" value="CAL19703.1"/>
    <property type="molecule type" value="Genomic_DNA"/>
</dbReference>
<dbReference type="EMBL" id="AE009952">
    <property type="protein sequence ID" value="AAM86693.1"/>
    <property type="molecule type" value="Genomic_DNA"/>
</dbReference>
<dbReference type="EMBL" id="AE017042">
    <property type="protein sequence ID" value="AAS62997.1"/>
    <property type="molecule type" value="Genomic_DNA"/>
</dbReference>
<dbReference type="PIR" id="AE0127">
    <property type="entry name" value="AE0127"/>
</dbReference>
<dbReference type="RefSeq" id="WP_002212125.1">
    <property type="nucleotide sequence ID" value="NZ_WUCM01000044.1"/>
</dbReference>
<dbReference type="RefSeq" id="YP_002346081.1">
    <property type="nucleotide sequence ID" value="NC_003143.1"/>
</dbReference>
<dbReference type="SMR" id="Q8ZH72"/>
<dbReference type="STRING" id="214092.YPO1038"/>
<dbReference type="PaxDb" id="214092-YPO1038"/>
<dbReference type="DNASU" id="1148090"/>
<dbReference type="EnsemblBacteria" id="AAS62997">
    <property type="protein sequence ID" value="AAS62997"/>
    <property type="gene ID" value="YP_2813"/>
</dbReference>
<dbReference type="GeneID" id="57977523"/>
<dbReference type="KEGG" id="ype:YPO1038"/>
<dbReference type="KEGG" id="ypk:y3143"/>
<dbReference type="KEGG" id="ypm:YP_2813"/>
<dbReference type="PATRIC" id="fig|214092.21.peg.1326"/>
<dbReference type="eggNOG" id="COG0564">
    <property type="taxonomic scope" value="Bacteria"/>
</dbReference>
<dbReference type="HOGENOM" id="CLU_016902_11_4_6"/>
<dbReference type="OMA" id="DRHETQF"/>
<dbReference type="OrthoDB" id="9785808at2"/>
<dbReference type="Proteomes" id="UP000000815">
    <property type="component" value="Chromosome"/>
</dbReference>
<dbReference type="Proteomes" id="UP000001019">
    <property type="component" value="Chromosome"/>
</dbReference>
<dbReference type="Proteomes" id="UP000002490">
    <property type="component" value="Chromosome"/>
</dbReference>
<dbReference type="GO" id="GO:0009982">
    <property type="term" value="F:pseudouridine synthase activity"/>
    <property type="evidence" value="ECO:0000318"/>
    <property type="project" value="GO_Central"/>
</dbReference>
<dbReference type="GO" id="GO:0003723">
    <property type="term" value="F:RNA binding"/>
    <property type="evidence" value="ECO:0007669"/>
    <property type="project" value="InterPro"/>
</dbReference>
<dbReference type="GO" id="GO:0160149">
    <property type="term" value="F:tRNA pseudouridine(65) synthase activity"/>
    <property type="evidence" value="ECO:0007669"/>
    <property type="project" value="UniProtKB-EC"/>
</dbReference>
<dbReference type="GO" id="GO:0000455">
    <property type="term" value="P:enzyme-directed rRNA pseudouridine synthesis"/>
    <property type="evidence" value="ECO:0000318"/>
    <property type="project" value="GO_Central"/>
</dbReference>
<dbReference type="GO" id="GO:0008033">
    <property type="term" value="P:tRNA processing"/>
    <property type="evidence" value="ECO:0007669"/>
    <property type="project" value="UniProtKB-KW"/>
</dbReference>
<dbReference type="CDD" id="cd02563">
    <property type="entry name" value="PseudoU_synth_TruC"/>
    <property type="match status" value="1"/>
</dbReference>
<dbReference type="FunFam" id="3.30.2350.10:FF:000008">
    <property type="entry name" value="tRNA pseudouridine synthase C"/>
    <property type="match status" value="1"/>
</dbReference>
<dbReference type="Gene3D" id="3.30.2350.10">
    <property type="entry name" value="Pseudouridine synthase"/>
    <property type="match status" value="1"/>
</dbReference>
<dbReference type="InterPro" id="IPR020103">
    <property type="entry name" value="PsdUridine_synth_cat_dom_sf"/>
</dbReference>
<dbReference type="InterPro" id="IPR006224">
    <property type="entry name" value="PsdUridine_synth_RluA-like_CS"/>
</dbReference>
<dbReference type="InterPro" id="IPR006145">
    <property type="entry name" value="PsdUridine_synth_RsuA/RluA"/>
</dbReference>
<dbReference type="InterPro" id="IPR050188">
    <property type="entry name" value="RluA_PseudoU_synthase"/>
</dbReference>
<dbReference type="NCBIfam" id="NF008321">
    <property type="entry name" value="PRK11112.1"/>
    <property type="match status" value="1"/>
</dbReference>
<dbReference type="PANTHER" id="PTHR21600">
    <property type="entry name" value="MITOCHONDRIAL RNA PSEUDOURIDINE SYNTHASE"/>
    <property type="match status" value="1"/>
</dbReference>
<dbReference type="PANTHER" id="PTHR21600:SF56">
    <property type="entry name" value="TRNA PSEUDOURIDINE SYNTHASE C"/>
    <property type="match status" value="1"/>
</dbReference>
<dbReference type="Pfam" id="PF00849">
    <property type="entry name" value="PseudoU_synth_2"/>
    <property type="match status" value="1"/>
</dbReference>
<dbReference type="SUPFAM" id="SSF55120">
    <property type="entry name" value="Pseudouridine synthase"/>
    <property type="match status" value="1"/>
</dbReference>
<dbReference type="PROSITE" id="PS01129">
    <property type="entry name" value="PSI_RLU"/>
    <property type="match status" value="1"/>
</dbReference>
<feature type="chain" id="PRO_0000162723" description="tRNA pseudouridine synthase C">
    <location>
        <begin position="1"/>
        <end position="257"/>
    </location>
</feature>
<feature type="active site" evidence="1">
    <location>
        <position position="54"/>
    </location>
</feature>